<name>IL2_DELLE</name>
<proteinExistence type="evidence at transcript level"/>
<organism>
    <name type="scientific">Delphinapterus leucas</name>
    <name type="common">Beluga whale</name>
    <dbReference type="NCBI Taxonomy" id="9749"/>
    <lineage>
        <taxon>Eukaryota</taxon>
        <taxon>Metazoa</taxon>
        <taxon>Chordata</taxon>
        <taxon>Craniata</taxon>
        <taxon>Vertebrata</taxon>
        <taxon>Euteleostomi</taxon>
        <taxon>Mammalia</taxon>
        <taxon>Eutheria</taxon>
        <taxon>Laurasiatheria</taxon>
        <taxon>Artiodactyla</taxon>
        <taxon>Whippomorpha</taxon>
        <taxon>Cetacea</taxon>
        <taxon>Odontoceti</taxon>
        <taxon>Monodontidae</taxon>
        <taxon>Delphinapterus</taxon>
    </lineage>
</organism>
<gene>
    <name type="primary">IL2</name>
</gene>
<comment type="function">
    <text evidence="2">Cytokine produced by activated CD4-positive helper T-cells and to a lesser extend activated CD8-positive T-cells and natural killer (NK) cells that plays pivotal roles in the immune response and tolerance. Binds to a receptor complex composed of either the high-affinity trimeric IL-2R (IL2RA/CD25, IL2RB/CD122 and IL2RG/CD132) or the low-affinity dimeric IL-2R (IL2RB and IL2RG). Interaction with the receptor leads to oligomerization and conformation changes in the IL-2R subunits resulting in downstream signaling starting with phosphorylation of JAK1 and JAK3. In turn, JAK1 and JAK3 phosphorylate the receptor to form a docking site leading to the phosphorylation of several substrates including STAT5. This process leads to activation of several pathways including STAT, phosphoinositide-3-kinase/PI3K and mitogen-activated protein kinase/MAPK pathways. Functions as a T-cell growth factor and can increase NK-cell cytolytic activity as well. Promotes strong proliferation of activated B-cells and subsequently immunoglobulin production. Plays a pivotal role in regulating the adaptive immune system by controlling the survival and proliferation of regulatory T-cells, which are required for the maintenance of immune tolerance. Moreover, participates in the differentiation and homeostasis of effector T-cell subsets, including Th1, Th2, Th17 as well as memory CD8-positive T-cells.</text>
</comment>
<comment type="subcellular location">
    <subcellularLocation>
        <location evidence="1">Secreted</location>
    </subcellularLocation>
</comment>
<comment type="similarity">
    <text evidence="3">Belongs to the IL-2 family.</text>
</comment>
<evidence type="ECO:0000250" key="1"/>
<evidence type="ECO:0000250" key="2">
    <source>
        <dbReference type="UniProtKB" id="P60568"/>
    </source>
</evidence>
<evidence type="ECO:0000305" key="3"/>
<accession>Q9XT84</accession>
<protein>
    <recommendedName>
        <fullName>Interleukin-2</fullName>
        <shortName>IL-2</shortName>
    </recommendedName>
    <alternativeName>
        <fullName>T-cell growth factor</fullName>
        <shortName>TCGF</shortName>
    </alternativeName>
</protein>
<dbReference type="EMBL" id="AF072870">
    <property type="protein sequence ID" value="AAD40847.1"/>
    <property type="molecule type" value="mRNA"/>
</dbReference>
<dbReference type="SMR" id="Q9XT84"/>
<dbReference type="FunCoup" id="Q9XT84">
    <property type="interactions" value="112"/>
</dbReference>
<dbReference type="STRING" id="9749.Q9XT84"/>
<dbReference type="GlyCosmos" id="Q9XT84">
    <property type="glycosylation" value="1 site, No reported glycans"/>
</dbReference>
<dbReference type="InParanoid" id="Q9XT84"/>
<dbReference type="Proteomes" id="UP000248483">
    <property type="component" value="Unplaced"/>
</dbReference>
<dbReference type="GO" id="GO:0005615">
    <property type="term" value="C:extracellular space"/>
    <property type="evidence" value="ECO:0007669"/>
    <property type="project" value="UniProtKB-KW"/>
</dbReference>
<dbReference type="GO" id="GO:0005125">
    <property type="term" value="F:cytokine activity"/>
    <property type="evidence" value="ECO:0007669"/>
    <property type="project" value="UniProtKB-KW"/>
</dbReference>
<dbReference type="GO" id="GO:0008083">
    <property type="term" value="F:growth factor activity"/>
    <property type="evidence" value="ECO:0007669"/>
    <property type="project" value="UniProtKB-KW"/>
</dbReference>
<dbReference type="GO" id="GO:0005134">
    <property type="term" value="F:interleukin-2 receptor binding"/>
    <property type="evidence" value="ECO:0007669"/>
    <property type="project" value="InterPro"/>
</dbReference>
<dbReference type="GO" id="GO:0002250">
    <property type="term" value="P:adaptive immune response"/>
    <property type="evidence" value="ECO:0007669"/>
    <property type="project" value="UniProtKB-KW"/>
</dbReference>
<dbReference type="Gene3D" id="1.20.1250.10">
    <property type="match status" value="1"/>
</dbReference>
<dbReference type="InterPro" id="IPR009079">
    <property type="entry name" value="4_helix_cytokine-like_core"/>
</dbReference>
<dbReference type="InterPro" id="IPR000779">
    <property type="entry name" value="IL-2"/>
</dbReference>
<dbReference type="InterPro" id="IPR030477">
    <property type="entry name" value="IL-2_CS"/>
</dbReference>
<dbReference type="PANTHER" id="PTHR48487">
    <property type="entry name" value="INTERLEUKIN-2"/>
    <property type="match status" value="1"/>
</dbReference>
<dbReference type="PANTHER" id="PTHR48487:SF1">
    <property type="entry name" value="INTERLEUKIN-2"/>
    <property type="match status" value="1"/>
</dbReference>
<dbReference type="Pfam" id="PF00715">
    <property type="entry name" value="IL2"/>
    <property type="match status" value="1"/>
</dbReference>
<dbReference type="PRINTS" id="PR00265">
    <property type="entry name" value="INTERLEUKIN2"/>
</dbReference>
<dbReference type="SMART" id="SM00189">
    <property type="entry name" value="IL2"/>
    <property type="match status" value="1"/>
</dbReference>
<dbReference type="SUPFAM" id="SSF47266">
    <property type="entry name" value="4-helical cytokines"/>
    <property type="match status" value="1"/>
</dbReference>
<dbReference type="PROSITE" id="PS00424">
    <property type="entry name" value="INTERLEUKIN_2"/>
    <property type="match status" value="1"/>
</dbReference>
<feature type="signal peptide" evidence="1">
    <location>
        <begin position="1"/>
        <end position="20"/>
    </location>
</feature>
<feature type="chain" id="PRO_0000015480" description="Interleukin-2">
    <location>
        <begin position="21"/>
        <end position="154"/>
    </location>
</feature>
<feature type="glycosylation site" description="O-linked (GalNAc...) threonine" evidence="1">
    <location>
        <position position="23"/>
    </location>
</feature>
<feature type="disulfide bond" evidence="1">
    <location>
        <begin position="78"/>
        <end position="126"/>
    </location>
</feature>
<reference key="1">
    <citation type="journal article" date="1999" name="Vet. Immunol. Immunopathol.">
        <title>Molecular cloning and phylogenetic analysis of beluga whale (Delphinapterus leucas) and grey seal (Halichoerus grypus) interleukin 2.</title>
        <authorList>
            <person name="St Laurent G."/>
            <person name="Beliveau C."/>
            <person name="Archambault D."/>
        </authorList>
    </citation>
    <scope>NUCLEOTIDE SEQUENCE [MRNA]</scope>
</reference>
<keyword id="KW-1064">Adaptive immunity</keyword>
<keyword id="KW-0202">Cytokine</keyword>
<keyword id="KW-1015">Disulfide bond</keyword>
<keyword id="KW-0325">Glycoprotein</keyword>
<keyword id="KW-0339">Growth factor</keyword>
<keyword id="KW-0391">Immunity</keyword>
<keyword id="KW-1185">Reference proteome</keyword>
<keyword id="KW-0964">Secreted</keyword>
<keyword id="KW-0732">Signal</keyword>
<sequence length="154" mass="17653">MYKMQLLSCIALTLALVANGAPTSSSTENTKKQVQSLLQDLHLLLKEINNHENLKLFRMLAFKFYMPKKATELKHLQCLAEELKPLEDVLNVAQSKTQNSIDIKDLMDNINRIVLTLKGSETRFTCEYDDETVTAVEFLNKWITFCQSIYSTMT</sequence>